<reference key="1">
    <citation type="submission" date="2007-04" db="EMBL/GenBank/DDBJ databases">
        <title>Complete sequence of Pseudomonas mendocina ymp.</title>
        <authorList>
            <consortium name="US DOE Joint Genome Institute"/>
            <person name="Copeland A."/>
            <person name="Lucas S."/>
            <person name="Lapidus A."/>
            <person name="Barry K."/>
            <person name="Glavina del Rio T."/>
            <person name="Dalin E."/>
            <person name="Tice H."/>
            <person name="Pitluck S."/>
            <person name="Kiss H."/>
            <person name="Brettin T."/>
            <person name="Detter J.C."/>
            <person name="Bruce D."/>
            <person name="Han C."/>
            <person name="Schmutz J."/>
            <person name="Larimer F."/>
            <person name="Land M."/>
            <person name="Hauser L."/>
            <person name="Kyrpides N."/>
            <person name="Mikhailova N."/>
            <person name="Hersman L."/>
            <person name="Dubois J."/>
            <person name="Maurice P."/>
            <person name="Richardson P."/>
        </authorList>
    </citation>
    <scope>NUCLEOTIDE SEQUENCE [LARGE SCALE GENOMIC DNA]</scope>
    <source>
        <strain>ymp</strain>
    </source>
</reference>
<sequence length="191" mass="19981">MSLVLVAVLALLGLCLIAGAILGFAAVRFKVEGDPIAEQINALLPQTQCGQCGYPGCKPYAEAIAGGDKINKCPPGGEATIQALADLLDVEPEPLDAVEGEKPQMVAFIREAECIGCTKCIQACPVDAIVGAARQMHTVIVSECTGCDLCVEPCPVDCIDMIEVGSTVQSWKWDKPLAPGQLIASDREQAA</sequence>
<name>RNFB_ECTM1</name>
<protein>
    <recommendedName>
        <fullName evidence="1">Ion-translocating oxidoreductase complex subunit B</fullName>
        <ecNumber evidence="1">7.-.-.-</ecNumber>
    </recommendedName>
    <alternativeName>
        <fullName evidence="1">Rnf electron transport complex subunit B</fullName>
    </alternativeName>
</protein>
<accession>A4XS52</accession>
<keyword id="KW-0004">4Fe-4S</keyword>
<keyword id="KW-0997">Cell inner membrane</keyword>
<keyword id="KW-1003">Cell membrane</keyword>
<keyword id="KW-0249">Electron transport</keyword>
<keyword id="KW-0408">Iron</keyword>
<keyword id="KW-0411">Iron-sulfur</keyword>
<keyword id="KW-0472">Membrane</keyword>
<keyword id="KW-0479">Metal-binding</keyword>
<keyword id="KW-0677">Repeat</keyword>
<keyword id="KW-1278">Translocase</keyword>
<keyword id="KW-0813">Transport</keyword>
<feature type="chain" id="PRO_1000060349" description="Ion-translocating oxidoreductase complex subunit B">
    <location>
        <begin position="1"/>
        <end position="191"/>
    </location>
</feature>
<feature type="domain" description="4Fe-4S" evidence="1">
    <location>
        <begin position="32"/>
        <end position="90"/>
    </location>
</feature>
<feature type="domain" description="4Fe-4S ferredoxin-type 1" evidence="1">
    <location>
        <begin position="105"/>
        <end position="134"/>
    </location>
</feature>
<feature type="domain" description="4Fe-4S ferredoxin-type 2" evidence="1">
    <location>
        <begin position="135"/>
        <end position="164"/>
    </location>
</feature>
<feature type="region of interest" description="Hydrophobic" evidence="1">
    <location>
        <begin position="1"/>
        <end position="26"/>
    </location>
</feature>
<feature type="binding site" evidence="1">
    <location>
        <position position="49"/>
    </location>
    <ligand>
        <name>[4Fe-4S] cluster</name>
        <dbReference type="ChEBI" id="CHEBI:49883"/>
        <label>1</label>
    </ligand>
</feature>
<feature type="binding site" evidence="1">
    <location>
        <position position="52"/>
    </location>
    <ligand>
        <name>[4Fe-4S] cluster</name>
        <dbReference type="ChEBI" id="CHEBI:49883"/>
        <label>1</label>
    </ligand>
</feature>
<feature type="binding site" evidence="1">
    <location>
        <position position="57"/>
    </location>
    <ligand>
        <name>[4Fe-4S] cluster</name>
        <dbReference type="ChEBI" id="CHEBI:49883"/>
        <label>1</label>
    </ligand>
</feature>
<feature type="binding site" evidence="1">
    <location>
        <position position="73"/>
    </location>
    <ligand>
        <name>[4Fe-4S] cluster</name>
        <dbReference type="ChEBI" id="CHEBI:49883"/>
        <label>1</label>
    </ligand>
</feature>
<feature type="binding site" evidence="1">
    <location>
        <position position="114"/>
    </location>
    <ligand>
        <name>[4Fe-4S] cluster</name>
        <dbReference type="ChEBI" id="CHEBI:49883"/>
        <label>2</label>
    </ligand>
</feature>
<feature type="binding site" evidence="1">
    <location>
        <position position="117"/>
    </location>
    <ligand>
        <name>[4Fe-4S] cluster</name>
        <dbReference type="ChEBI" id="CHEBI:49883"/>
        <label>2</label>
    </ligand>
</feature>
<feature type="binding site" evidence="1">
    <location>
        <position position="120"/>
    </location>
    <ligand>
        <name>[4Fe-4S] cluster</name>
        <dbReference type="ChEBI" id="CHEBI:49883"/>
        <label>2</label>
    </ligand>
</feature>
<feature type="binding site" evidence="1">
    <location>
        <position position="124"/>
    </location>
    <ligand>
        <name>[4Fe-4S] cluster</name>
        <dbReference type="ChEBI" id="CHEBI:49883"/>
        <label>3</label>
    </ligand>
</feature>
<feature type="binding site" evidence="1">
    <location>
        <position position="144"/>
    </location>
    <ligand>
        <name>[4Fe-4S] cluster</name>
        <dbReference type="ChEBI" id="CHEBI:49883"/>
        <label>3</label>
    </ligand>
</feature>
<feature type="binding site" evidence="1">
    <location>
        <position position="147"/>
    </location>
    <ligand>
        <name>[4Fe-4S] cluster</name>
        <dbReference type="ChEBI" id="CHEBI:49883"/>
        <label>3</label>
    </ligand>
</feature>
<feature type="binding site" evidence="1">
    <location>
        <position position="150"/>
    </location>
    <ligand>
        <name>[4Fe-4S] cluster</name>
        <dbReference type="ChEBI" id="CHEBI:49883"/>
        <label>3</label>
    </ligand>
</feature>
<feature type="binding site" evidence="1">
    <location>
        <position position="154"/>
    </location>
    <ligand>
        <name>[4Fe-4S] cluster</name>
        <dbReference type="ChEBI" id="CHEBI:49883"/>
        <label>2</label>
    </ligand>
</feature>
<dbReference type="EC" id="7.-.-.-" evidence="1"/>
<dbReference type="EMBL" id="CP000680">
    <property type="protein sequence ID" value="ABP84168.1"/>
    <property type="molecule type" value="Genomic_DNA"/>
</dbReference>
<dbReference type="STRING" id="399739.Pmen_1403"/>
<dbReference type="KEGG" id="pmy:Pmen_1403"/>
<dbReference type="eggNOG" id="COG2878">
    <property type="taxonomic scope" value="Bacteria"/>
</dbReference>
<dbReference type="HOGENOM" id="CLU_063448_2_0_6"/>
<dbReference type="OrthoDB" id="9789936at2"/>
<dbReference type="GO" id="GO:0005886">
    <property type="term" value="C:plasma membrane"/>
    <property type="evidence" value="ECO:0007669"/>
    <property type="project" value="UniProtKB-SubCell"/>
</dbReference>
<dbReference type="GO" id="GO:0051539">
    <property type="term" value="F:4 iron, 4 sulfur cluster binding"/>
    <property type="evidence" value="ECO:0007669"/>
    <property type="project" value="UniProtKB-UniRule"/>
</dbReference>
<dbReference type="GO" id="GO:0009055">
    <property type="term" value="F:electron transfer activity"/>
    <property type="evidence" value="ECO:0007669"/>
    <property type="project" value="InterPro"/>
</dbReference>
<dbReference type="GO" id="GO:0046872">
    <property type="term" value="F:metal ion binding"/>
    <property type="evidence" value="ECO:0007669"/>
    <property type="project" value="UniProtKB-KW"/>
</dbReference>
<dbReference type="GO" id="GO:0022900">
    <property type="term" value="P:electron transport chain"/>
    <property type="evidence" value="ECO:0007669"/>
    <property type="project" value="UniProtKB-UniRule"/>
</dbReference>
<dbReference type="FunFam" id="1.10.15.40:FF:000001">
    <property type="entry name" value="Ion-translocating oxidoreductase complex subunit B"/>
    <property type="match status" value="1"/>
</dbReference>
<dbReference type="Gene3D" id="3.30.70.20">
    <property type="match status" value="1"/>
</dbReference>
<dbReference type="Gene3D" id="1.10.15.40">
    <property type="entry name" value="Electron transport complex subunit B, putative Fe-S cluster"/>
    <property type="match status" value="1"/>
</dbReference>
<dbReference type="HAMAP" id="MF_00463">
    <property type="entry name" value="RsxB_RnfB"/>
    <property type="match status" value="1"/>
</dbReference>
<dbReference type="InterPro" id="IPR007202">
    <property type="entry name" value="4Fe-4S_dom"/>
</dbReference>
<dbReference type="InterPro" id="IPR017896">
    <property type="entry name" value="4Fe4S_Fe-S-bd"/>
</dbReference>
<dbReference type="InterPro" id="IPR017900">
    <property type="entry name" value="4Fe4S_Fe_S_CS"/>
</dbReference>
<dbReference type="InterPro" id="IPR010207">
    <property type="entry name" value="Elect_transpt_cplx_RnfB/RsxB"/>
</dbReference>
<dbReference type="InterPro" id="IPR016463">
    <property type="entry name" value="RnfB/RsxB_Proteobac"/>
</dbReference>
<dbReference type="InterPro" id="IPR050294">
    <property type="entry name" value="RnfB_subfamily"/>
</dbReference>
<dbReference type="NCBIfam" id="NF003475">
    <property type="entry name" value="PRK05113.1"/>
    <property type="match status" value="1"/>
</dbReference>
<dbReference type="NCBIfam" id="TIGR01944">
    <property type="entry name" value="rnfB"/>
    <property type="match status" value="1"/>
</dbReference>
<dbReference type="PANTHER" id="PTHR42859:SF3">
    <property type="entry name" value="ION-TRANSLOCATING OXIDOREDUCTASE COMPLEX SUBUNIT B"/>
    <property type="match status" value="1"/>
</dbReference>
<dbReference type="PANTHER" id="PTHR42859">
    <property type="entry name" value="OXIDOREDUCTASE"/>
    <property type="match status" value="1"/>
</dbReference>
<dbReference type="Pfam" id="PF14697">
    <property type="entry name" value="Fer4_21"/>
    <property type="match status" value="1"/>
</dbReference>
<dbReference type="Pfam" id="PF04060">
    <property type="entry name" value="FeS"/>
    <property type="match status" value="1"/>
</dbReference>
<dbReference type="PIRSF" id="PIRSF005784">
    <property type="entry name" value="Elect_transpt_RnfB"/>
    <property type="match status" value="1"/>
</dbReference>
<dbReference type="SUPFAM" id="SSF54862">
    <property type="entry name" value="4Fe-4S ferredoxins"/>
    <property type="match status" value="1"/>
</dbReference>
<dbReference type="PROSITE" id="PS51656">
    <property type="entry name" value="4FE4S"/>
    <property type="match status" value="1"/>
</dbReference>
<dbReference type="PROSITE" id="PS00198">
    <property type="entry name" value="4FE4S_FER_1"/>
    <property type="match status" value="2"/>
</dbReference>
<dbReference type="PROSITE" id="PS51379">
    <property type="entry name" value="4FE4S_FER_2"/>
    <property type="match status" value="2"/>
</dbReference>
<gene>
    <name evidence="1" type="primary">rnfB</name>
    <name type="ordered locus">Pmen_1403</name>
</gene>
<evidence type="ECO:0000255" key="1">
    <source>
        <dbReference type="HAMAP-Rule" id="MF_00463"/>
    </source>
</evidence>
<proteinExistence type="inferred from homology"/>
<comment type="function">
    <text evidence="1">Part of a membrane-bound complex that couples electron transfer with translocation of ions across the membrane.</text>
</comment>
<comment type="cofactor">
    <cofactor evidence="1">
        <name>[4Fe-4S] cluster</name>
        <dbReference type="ChEBI" id="CHEBI:49883"/>
    </cofactor>
    <text evidence="1">Binds 3 [4Fe-4S] clusters.</text>
</comment>
<comment type="subunit">
    <text evidence="1">The complex is composed of six subunits: RnfA, RnfB, RnfC, RnfD, RnfE and RnfG.</text>
</comment>
<comment type="subcellular location">
    <subcellularLocation>
        <location evidence="1">Cell inner membrane</location>
    </subcellularLocation>
</comment>
<comment type="similarity">
    <text evidence="1">Belongs to the 4Fe4S bacterial-type ferredoxin family. RnfB subfamily.</text>
</comment>
<organism>
    <name type="scientific">Ectopseudomonas mendocina (strain ymp)</name>
    <name type="common">Pseudomonas mendocina</name>
    <dbReference type="NCBI Taxonomy" id="399739"/>
    <lineage>
        <taxon>Bacteria</taxon>
        <taxon>Pseudomonadati</taxon>
        <taxon>Pseudomonadota</taxon>
        <taxon>Gammaproteobacteria</taxon>
        <taxon>Pseudomonadales</taxon>
        <taxon>Pseudomonadaceae</taxon>
        <taxon>Ectopseudomonas</taxon>
    </lineage>
</organism>